<reference key="1">
    <citation type="journal article" date="2011" name="J. Bacteriol.">
        <title>Comparative genomics of 28 Salmonella enterica isolates: evidence for CRISPR-mediated adaptive sublineage evolution.</title>
        <authorList>
            <person name="Fricke W.F."/>
            <person name="Mammel M.K."/>
            <person name="McDermott P.F."/>
            <person name="Tartera C."/>
            <person name="White D.G."/>
            <person name="Leclerc J.E."/>
            <person name="Ravel J."/>
            <person name="Cebula T.A."/>
        </authorList>
    </citation>
    <scope>NUCLEOTIDE SEQUENCE [LARGE SCALE GENOMIC DNA]</scope>
    <source>
        <strain>SL476</strain>
    </source>
</reference>
<gene>
    <name evidence="1" type="primary">rpmA</name>
    <name type="ordered locus">SeHA_C3600</name>
</gene>
<comment type="similarity">
    <text evidence="1">Belongs to the bacterial ribosomal protein bL27 family.</text>
</comment>
<evidence type="ECO:0000255" key="1">
    <source>
        <dbReference type="HAMAP-Rule" id="MF_00539"/>
    </source>
</evidence>
<evidence type="ECO:0000256" key="2">
    <source>
        <dbReference type="SAM" id="MobiDB-lite"/>
    </source>
</evidence>
<evidence type="ECO:0000305" key="3"/>
<protein>
    <recommendedName>
        <fullName evidence="1">Large ribosomal subunit protein bL27</fullName>
    </recommendedName>
    <alternativeName>
        <fullName evidence="3">50S ribosomal protein L27</fullName>
    </alternativeName>
</protein>
<organism>
    <name type="scientific">Salmonella heidelberg (strain SL476)</name>
    <dbReference type="NCBI Taxonomy" id="454169"/>
    <lineage>
        <taxon>Bacteria</taxon>
        <taxon>Pseudomonadati</taxon>
        <taxon>Pseudomonadota</taxon>
        <taxon>Gammaproteobacteria</taxon>
        <taxon>Enterobacterales</taxon>
        <taxon>Enterobacteriaceae</taxon>
        <taxon>Salmonella</taxon>
    </lineage>
</organism>
<sequence>MAHKKAGGSTRNGRDSEAKRLGVKRFGGEAVLAGSIIVRQRGTKFHAGTNVGCGRDHTLFAKADGKVKFEVKGPKNRKYISIVAE</sequence>
<proteinExistence type="inferred from homology"/>
<keyword id="KW-0687">Ribonucleoprotein</keyword>
<keyword id="KW-0689">Ribosomal protein</keyword>
<dbReference type="EMBL" id="CP001120">
    <property type="protein sequence ID" value="ACF67084.1"/>
    <property type="molecule type" value="Genomic_DNA"/>
</dbReference>
<dbReference type="RefSeq" id="WP_000940593.1">
    <property type="nucleotide sequence ID" value="NC_011083.1"/>
</dbReference>
<dbReference type="SMR" id="B4TJ23"/>
<dbReference type="GeneID" id="66757642"/>
<dbReference type="KEGG" id="seh:SeHA_C3600"/>
<dbReference type="HOGENOM" id="CLU_095424_4_1_6"/>
<dbReference type="Proteomes" id="UP000001866">
    <property type="component" value="Chromosome"/>
</dbReference>
<dbReference type="GO" id="GO:0022625">
    <property type="term" value="C:cytosolic large ribosomal subunit"/>
    <property type="evidence" value="ECO:0007669"/>
    <property type="project" value="TreeGrafter"/>
</dbReference>
<dbReference type="GO" id="GO:0003735">
    <property type="term" value="F:structural constituent of ribosome"/>
    <property type="evidence" value="ECO:0007669"/>
    <property type="project" value="InterPro"/>
</dbReference>
<dbReference type="GO" id="GO:0006412">
    <property type="term" value="P:translation"/>
    <property type="evidence" value="ECO:0007669"/>
    <property type="project" value="UniProtKB-UniRule"/>
</dbReference>
<dbReference type="FunFam" id="2.40.50.100:FF:000001">
    <property type="entry name" value="50S ribosomal protein L27"/>
    <property type="match status" value="1"/>
</dbReference>
<dbReference type="Gene3D" id="2.40.50.100">
    <property type="match status" value="1"/>
</dbReference>
<dbReference type="HAMAP" id="MF_00539">
    <property type="entry name" value="Ribosomal_bL27"/>
    <property type="match status" value="1"/>
</dbReference>
<dbReference type="InterPro" id="IPR001684">
    <property type="entry name" value="Ribosomal_bL27"/>
</dbReference>
<dbReference type="InterPro" id="IPR018261">
    <property type="entry name" value="Ribosomal_bL27_CS"/>
</dbReference>
<dbReference type="NCBIfam" id="TIGR00062">
    <property type="entry name" value="L27"/>
    <property type="match status" value="1"/>
</dbReference>
<dbReference type="PANTHER" id="PTHR15893:SF0">
    <property type="entry name" value="LARGE RIBOSOMAL SUBUNIT PROTEIN BL27M"/>
    <property type="match status" value="1"/>
</dbReference>
<dbReference type="PANTHER" id="PTHR15893">
    <property type="entry name" value="RIBOSOMAL PROTEIN L27"/>
    <property type="match status" value="1"/>
</dbReference>
<dbReference type="Pfam" id="PF01016">
    <property type="entry name" value="Ribosomal_L27"/>
    <property type="match status" value="1"/>
</dbReference>
<dbReference type="PRINTS" id="PR00063">
    <property type="entry name" value="RIBOSOMALL27"/>
</dbReference>
<dbReference type="SUPFAM" id="SSF110324">
    <property type="entry name" value="Ribosomal L27 protein-like"/>
    <property type="match status" value="1"/>
</dbReference>
<dbReference type="PROSITE" id="PS00831">
    <property type="entry name" value="RIBOSOMAL_L27"/>
    <property type="match status" value="1"/>
</dbReference>
<accession>B4TJ23</accession>
<feature type="chain" id="PRO_1000128804" description="Large ribosomal subunit protein bL27">
    <location>
        <begin position="1"/>
        <end position="85"/>
    </location>
</feature>
<feature type="region of interest" description="Disordered" evidence="2">
    <location>
        <begin position="1"/>
        <end position="20"/>
    </location>
</feature>
<name>RL27_SALHS</name>